<reference key="1">
    <citation type="journal article" date="2000" name="Science">
        <title>Complete genome sequence of Neisseria meningitidis serogroup B strain MC58.</title>
        <authorList>
            <person name="Tettelin H."/>
            <person name="Saunders N.J."/>
            <person name="Heidelberg J.F."/>
            <person name="Jeffries A.C."/>
            <person name="Nelson K.E."/>
            <person name="Eisen J.A."/>
            <person name="Ketchum K.A."/>
            <person name="Hood D.W."/>
            <person name="Peden J.F."/>
            <person name="Dodson R.J."/>
            <person name="Nelson W.C."/>
            <person name="Gwinn M.L."/>
            <person name="DeBoy R.T."/>
            <person name="Peterson J.D."/>
            <person name="Hickey E.K."/>
            <person name="Haft D.H."/>
            <person name="Salzberg S.L."/>
            <person name="White O."/>
            <person name="Fleischmann R.D."/>
            <person name="Dougherty B.A."/>
            <person name="Mason T.M."/>
            <person name="Ciecko A."/>
            <person name="Parksey D.S."/>
            <person name="Blair E."/>
            <person name="Cittone H."/>
            <person name="Clark E.B."/>
            <person name="Cotton M.D."/>
            <person name="Utterback T.R."/>
            <person name="Khouri H.M."/>
            <person name="Qin H."/>
            <person name="Vamathevan J.J."/>
            <person name="Gill J."/>
            <person name="Scarlato V."/>
            <person name="Masignani V."/>
            <person name="Pizza M."/>
            <person name="Grandi G."/>
            <person name="Sun L."/>
            <person name="Smith H.O."/>
            <person name="Fraser C.M."/>
            <person name="Moxon E.R."/>
            <person name="Rappuoli R."/>
            <person name="Venter J.C."/>
        </authorList>
    </citation>
    <scope>NUCLEOTIDE SEQUENCE [LARGE SCALE GENOMIC DNA]</scope>
    <source>
        <strain>ATCC BAA-335 / MC58</strain>
    </source>
</reference>
<comment type="similarity">
    <text evidence="1">Belongs to the UPF0237 family.</text>
</comment>
<sequence length="90" mass="10362">MNNSVITVIGKDRVGIVYDVSKILAENQINILNISQQLMDDFFTMIILVDTSKCSKSRQEVLDLFAEESKKLALDIRMQNEEIFQAMHRI</sequence>
<accession>Q9JYC2</accession>
<name>Y1653_NEIMB</name>
<evidence type="ECO:0000255" key="1">
    <source>
        <dbReference type="HAMAP-Rule" id="MF_01054"/>
    </source>
</evidence>
<protein>
    <recommendedName>
        <fullName evidence="1">UPF0237 protein NMB1653</fullName>
    </recommendedName>
</protein>
<keyword id="KW-1185">Reference proteome</keyword>
<gene>
    <name type="ordered locus">NMB1653</name>
</gene>
<proteinExistence type="inferred from homology"/>
<organism>
    <name type="scientific">Neisseria meningitidis serogroup B (strain ATCC BAA-335 / MC58)</name>
    <dbReference type="NCBI Taxonomy" id="122586"/>
    <lineage>
        <taxon>Bacteria</taxon>
        <taxon>Pseudomonadati</taxon>
        <taxon>Pseudomonadota</taxon>
        <taxon>Betaproteobacteria</taxon>
        <taxon>Neisseriales</taxon>
        <taxon>Neisseriaceae</taxon>
        <taxon>Neisseria</taxon>
    </lineage>
</organism>
<feature type="chain" id="PRO_0000219905" description="UPF0237 protein NMB1653">
    <location>
        <begin position="1"/>
        <end position="90"/>
    </location>
</feature>
<feature type="domain" description="ACT" evidence="1">
    <location>
        <begin position="5"/>
        <end position="83"/>
    </location>
</feature>
<dbReference type="EMBL" id="AE002098">
    <property type="protein sequence ID" value="AAF42002.1"/>
    <property type="molecule type" value="Genomic_DNA"/>
</dbReference>
<dbReference type="PIR" id="D81059">
    <property type="entry name" value="D81059"/>
</dbReference>
<dbReference type="RefSeq" id="NP_274658.1">
    <property type="nucleotide sequence ID" value="NC_003112.2"/>
</dbReference>
<dbReference type="RefSeq" id="WP_002218494.1">
    <property type="nucleotide sequence ID" value="NC_003112.2"/>
</dbReference>
<dbReference type="SMR" id="Q9JYC2"/>
<dbReference type="STRING" id="122586.NMB1653"/>
<dbReference type="PaxDb" id="122586-NMB1653"/>
<dbReference type="KEGG" id="nme:NMB1653"/>
<dbReference type="PATRIC" id="fig|122586.8.peg.2126"/>
<dbReference type="HOGENOM" id="CLU_155669_0_1_4"/>
<dbReference type="InParanoid" id="Q9JYC2"/>
<dbReference type="OrthoDB" id="9803078at2"/>
<dbReference type="Proteomes" id="UP000000425">
    <property type="component" value="Chromosome"/>
</dbReference>
<dbReference type="GO" id="GO:0005829">
    <property type="term" value="C:cytosol"/>
    <property type="evidence" value="ECO:0000318"/>
    <property type="project" value="GO_Central"/>
</dbReference>
<dbReference type="GO" id="GO:0006351">
    <property type="term" value="P:DNA-templated transcription"/>
    <property type="evidence" value="ECO:0000318"/>
    <property type="project" value="GO_Central"/>
</dbReference>
<dbReference type="CDD" id="cd04872">
    <property type="entry name" value="ACT_1ZPV"/>
    <property type="match status" value="1"/>
</dbReference>
<dbReference type="FunFam" id="3.30.70.260:FF:000032">
    <property type="entry name" value="UPF0237 protein SP_0238"/>
    <property type="match status" value="1"/>
</dbReference>
<dbReference type="Gene3D" id="3.30.70.260">
    <property type="match status" value="1"/>
</dbReference>
<dbReference type="HAMAP" id="MF_01054">
    <property type="entry name" value="UPF0237"/>
    <property type="match status" value="1"/>
</dbReference>
<dbReference type="InterPro" id="IPR045865">
    <property type="entry name" value="ACT-like_dom_sf"/>
</dbReference>
<dbReference type="InterPro" id="IPR002912">
    <property type="entry name" value="ACT_dom"/>
</dbReference>
<dbReference type="InterPro" id="IPR050990">
    <property type="entry name" value="UPF0237/GcvR_regulator"/>
</dbReference>
<dbReference type="InterPro" id="IPR022986">
    <property type="entry name" value="UPF0237_ACT"/>
</dbReference>
<dbReference type="NCBIfam" id="NF001220">
    <property type="entry name" value="PRK00194.1"/>
    <property type="match status" value="1"/>
</dbReference>
<dbReference type="PANTHER" id="PTHR34875">
    <property type="entry name" value="UPF0237 PROTEIN MJ1558"/>
    <property type="match status" value="1"/>
</dbReference>
<dbReference type="PANTHER" id="PTHR34875:SF6">
    <property type="entry name" value="UPF0237 PROTEIN MJ1558"/>
    <property type="match status" value="1"/>
</dbReference>
<dbReference type="Pfam" id="PF13740">
    <property type="entry name" value="ACT_6"/>
    <property type="match status" value="1"/>
</dbReference>
<dbReference type="SUPFAM" id="SSF55021">
    <property type="entry name" value="ACT-like"/>
    <property type="match status" value="1"/>
</dbReference>
<dbReference type="PROSITE" id="PS51671">
    <property type="entry name" value="ACT"/>
    <property type="match status" value="1"/>
</dbReference>